<keyword id="KW-0963">Cytoplasm</keyword>
<keyword id="KW-1185">Reference proteome</keyword>
<keyword id="KW-0690">Ribosome biogenesis</keyword>
<name>RIMP_HYPNA</name>
<evidence type="ECO:0000255" key="1">
    <source>
        <dbReference type="HAMAP-Rule" id="MF_01077"/>
    </source>
</evidence>
<evidence type="ECO:0000256" key="2">
    <source>
        <dbReference type="SAM" id="MobiDB-lite"/>
    </source>
</evidence>
<comment type="function">
    <text evidence="1">Required for maturation of 30S ribosomal subunits.</text>
</comment>
<comment type="subcellular location">
    <subcellularLocation>
        <location evidence="1">Cytoplasm</location>
    </subcellularLocation>
</comment>
<comment type="similarity">
    <text evidence="1">Belongs to the RimP family.</text>
</comment>
<accession>Q0C5Z8</accession>
<protein>
    <recommendedName>
        <fullName evidence="1">Ribosome maturation factor RimP</fullName>
    </recommendedName>
</protein>
<gene>
    <name evidence="1" type="primary">rimP</name>
    <name type="ordered locus">HNE_0111</name>
</gene>
<reference key="1">
    <citation type="journal article" date="2006" name="J. Bacteriol.">
        <title>Comparative genomic evidence for a close relationship between the dimorphic prosthecate bacteria Hyphomonas neptunium and Caulobacter crescentus.</title>
        <authorList>
            <person name="Badger J.H."/>
            <person name="Hoover T.R."/>
            <person name="Brun Y.V."/>
            <person name="Weiner R.M."/>
            <person name="Laub M.T."/>
            <person name="Alexandre G."/>
            <person name="Mrazek J."/>
            <person name="Ren Q."/>
            <person name="Paulsen I.T."/>
            <person name="Nelson K.E."/>
            <person name="Khouri H.M."/>
            <person name="Radune D."/>
            <person name="Sosa J."/>
            <person name="Dodson R.J."/>
            <person name="Sullivan S.A."/>
            <person name="Rosovitz M.J."/>
            <person name="Madupu R."/>
            <person name="Brinkac L.M."/>
            <person name="Durkin A.S."/>
            <person name="Daugherty S.C."/>
            <person name="Kothari S.P."/>
            <person name="Giglio M.G."/>
            <person name="Zhou L."/>
            <person name="Haft D.H."/>
            <person name="Selengut J.D."/>
            <person name="Davidsen T.M."/>
            <person name="Yang Q."/>
            <person name="Zafar N."/>
            <person name="Ward N.L."/>
        </authorList>
    </citation>
    <scope>NUCLEOTIDE SEQUENCE [LARGE SCALE GENOMIC DNA]</scope>
    <source>
        <strain>ATCC 15444</strain>
    </source>
</reference>
<dbReference type="EMBL" id="CP000158">
    <property type="protein sequence ID" value="ABI78419.1"/>
    <property type="molecule type" value="Genomic_DNA"/>
</dbReference>
<dbReference type="RefSeq" id="WP_011645145.1">
    <property type="nucleotide sequence ID" value="NC_008358.1"/>
</dbReference>
<dbReference type="SMR" id="Q0C5Z8"/>
<dbReference type="STRING" id="228405.HNE_0111"/>
<dbReference type="KEGG" id="hne:HNE_0111"/>
<dbReference type="eggNOG" id="COG0779">
    <property type="taxonomic scope" value="Bacteria"/>
</dbReference>
<dbReference type="HOGENOM" id="CLU_070525_0_1_5"/>
<dbReference type="Proteomes" id="UP000001959">
    <property type="component" value="Chromosome"/>
</dbReference>
<dbReference type="GO" id="GO:0005829">
    <property type="term" value="C:cytosol"/>
    <property type="evidence" value="ECO:0007669"/>
    <property type="project" value="TreeGrafter"/>
</dbReference>
<dbReference type="GO" id="GO:0000028">
    <property type="term" value="P:ribosomal small subunit assembly"/>
    <property type="evidence" value="ECO:0007669"/>
    <property type="project" value="TreeGrafter"/>
</dbReference>
<dbReference type="GO" id="GO:0006412">
    <property type="term" value="P:translation"/>
    <property type="evidence" value="ECO:0007669"/>
    <property type="project" value="TreeGrafter"/>
</dbReference>
<dbReference type="CDD" id="cd01734">
    <property type="entry name" value="YlxS_C"/>
    <property type="match status" value="1"/>
</dbReference>
<dbReference type="Gene3D" id="2.30.30.180">
    <property type="entry name" value="Ribosome maturation factor RimP, C-terminal domain"/>
    <property type="match status" value="1"/>
</dbReference>
<dbReference type="Gene3D" id="3.30.300.70">
    <property type="entry name" value="RimP-like superfamily, N-terminal"/>
    <property type="match status" value="1"/>
</dbReference>
<dbReference type="HAMAP" id="MF_01077">
    <property type="entry name" value="RimP"/>
    <property type="match status" value="1"/>
</dbReference>
<dbReference type="InterPro" id="IPR003728">
    <property type="entry name" value="Ribosome_maturation_RimP"/>
</dbReference>
<dbReference type="InterPro" id="IPR028998">
    <property type="entry name" value="RimP_C"/>
</dbReference>
<dbReference type="InterPro" id="IPR036847">
    <property type="entry name" value="RimP_C_sf"/>
</dbReference>
<dbReference type="InterPro" id="IPR028989">
    <property type="entry name" value="RimP_N"/>
</dbReference>
<dbReference type="InterPro" id="IPR035956">
    <property type="entry name" value="RimP_N_sf"/>
</dbReference>
<dbReference type="NCBIfam" id="NF000932">
    <property type="entry name" value="PRK00092.2-5"/>
    <property type="match status" value="1"/>
</dbReference>
<dbReference type="PANTHER" id="PTHR33867">
    <property type="entry name" value="RIBOSOME MATURATION FACTOR RIMP"/>
    <property type="match status" value="1"/>
</dbReference>
<dbReference type="PANTHER" id="PTHR33867:SF1">
    <property type="entry name" value="RIBOSOME MATURATION FACTOR RIMP"/>
    <property type="match status" value="1"/>
</dbReference>
<dbReference type="Pfam" id="PF17384">
    <property type="entry name" value="DUF150_C"/>
    <property type="match status" value="1"/>
</dbReference>
<dbReference type="Pfam" id="PF02576">
    <property type="entry name" value="RimP_N"/>
    <property type="match status" value="1"/>
</dbReference>
<dbReference type="SUPFAM" id="SSF74942">
    <property type="entry name" value="YhbC-like, C-terminal domain"/>
    <property type="match status" value="1"/>
</dbReference>
<dbReference type="SUPFAM" id="SSF75420">
    <property type="entry name" value="YhbC-like, N-terminal domain"/>
    <property type="match status" value="1"/>
</dbReference>
<proteinExistence type="inferred from homology"/>
<sequence length="199" mass="21812">MIVLTEQERRLLSLVQPVAEGLGMEIVRLRVQGGRRPHLQIMAERAGGAPTGIEDCARLSRGMSPVLEAADPISEAYTLEVSTPGIDRPLTRPGDFARWIGHAVRIELARPIDGRRRFTGTITGEDNDGAHIELDDETKLVAAVHEMSRASLVLTDELIEAARVAGNLPPQPEDDEDMLADFEIDESEDEEDPETGDVQ</sequence>
<organism>
    <name type="scientific">Hyphomonas neptunium (strain ATCC 15444)</name>
    <dbReference type="NCBI Taxonomy" id="228405"/>
    <lineage>
        <taxon>Bacteria</taxon>
        <taxon>Pseudomonadati</taxon>
        <taxon>Pseudomonadota</taxon>
        <taxon>Alphaproteobacteria</taxon>
        <taxon>Hyphomonadales</taxon>
        <taxon>Hyphomonadaceae</taxon>
        <taxon>Hyphomonas</taxon>
    </lineage>
</organism>
<feature type="chain" id="PRO_0000384684" description="Ribosome maturation factor RimP">
    <location>
        <begin position="1"/>
        <end position="199"/>
    </location>
</feature>
<feature type="region of interest" description="Disordered" evidence="2">
    <location>
        <begin position="165"/>
        <end position="199"/>
    </location>
</feature>
<feature type="compositionally biased region" description="Acidic residues" evidence="2">
    <location>
        <begin position="172"/>
        <end position="199"/>
    </location>
</feature>